<evidence type="ECO:0000255" key="1"/>
<evidence type="ECO:0000269" key="2">
    <source>
    </source>
</evidence>
<organism>
    <name type="scientific">Acanthamoeba polyphaga mimivirus</name>
    <name type="common">APMV</name>
    <dbReference type="NCBI Taxonomy" id="212035"/>
    <lineage>
        <taxon>Viruses</taxon>
        <taxon>Varidnaviria</taxon>
        <taxon>Bamfordvirae</taxon>
        <taxon>Nucleocytoviricota</taxon>
        <taxon>Megaviricetes</taxon>
        <taxon>Imitervirales</taxon>
        <taxon>Mimiviridae</taxon>
        <taxon>Megamimivirinae</taxon>
        <taxon>Mimivirus</taxon>
        <taxon>Mimivirus bradfordmassiliense</taxon>
    </lineage>
</organism>
<gene>
    <name type="ordered locus">MIMI_L612</name>
</gene>
<proteinExistence type="evidence at protein level"/>
<feature type="chain" id="PRO_0000244062" description="Uncharacterized protein L612">
    <location>
        <begin position="1"/>
        <end position="160"/>
    </location>
</feature>
<feature type="domain" description="Cupin type-2" evidence="1">
    <location>
        <begin position="37"/>
        <end position="110"/>
    </location>
</feature>
<dbReference type="EMBL" id="AY653733">
    <property type="protein sequence ID" value="AAV50874.1"/>
    <property type="molecule type" value="Genomic_DNA"/>
</dbReference>
<dbReference type="SMR" id="Q5UP75"/>
<dbReference type="KEGG" id="vg:9925252"/>
<dbReference type="OrthoDB" id="20211at10239"/>
<dbReference type="Proteomes" id="UP000001134">
    <property type="component" value="Genome"/>
</dbReference>
<dbReference type="GO" id="GO:0044423">
    <property type="term" value="C:virion component"/>
    <property type="evidence" value="ECO:0007669"/>
    <property type="project" value="UniProtKB-KW"/>
</dbReference>
<dbReference type="CDD" id="cd02223">
    <property type="entry name" value="cupin_Bh2720-like"/>
    <property type="match status" value="1"/>
</dbReference>
<dbReference type="Gene3D" id="2.60.120.10">
    <property type="entry name" value="Jelly Rolls"/>
    <property type="match status" value="1"/>
</dbReference>
<dbReference type="InterPro" id="IPR013096">
    <property type="entry name" value="Cupin_2"/>
</dbReference>
<dbReference type="InterPro" id="IPR052538">
    <property type="entry name" value="Flavonoid_dioxygenase-like"/>
</dbReference>
<dbReference type="InterPro" id="IPR014710">
    <property type="entry name" value="RmlC-like_jellyroll"/>
</dbReference>
<dbReference type="InterPro" id="IPR011051">
    <property type="entry name" value="RmlC_Cupin_sf"/>
</dbReference>
<dbReference type="PANTHER" id="PTHR43346">
    <property type="entry name" value="LIGAND BINDING DOMAIN PROTEIN, PUTATIVE (AFU_ORTHOLOGUE AFUA_6G14370)-RELATED"/>
    <property type="match status" value="1"/>
</dbReference>
<dbReference type="PANTHER" id="PTHR43346:SF1">
    <property type="entry name" value="QUERCETIN 2,3-DIOXYGENASE-RELATED"/>
    <property type="match status" value="1"/>
</dbReference>
<dbReference type="Pfam" id="PF07883">
    <property type="entry name" value="Cupin_2"/>
    <property type="match status" value="1"/>
</dbReference>
<dbReference type="SUPFAM" id="SSF51182">
    <property type="entry name" value="RmlC-like cupins"/>
    <property type="match status" value="1"/>
</dbReference>
<keyword id="KW-1185">Reference proteome</keyword>
<keyword id="KW-0946">Virion</keyword>
<sequence>MISNQNQVYVVNVREETLKNPYYRRVIDTSPHQQLVLMSLKPKEDIKFEIHPDNDQHIRIEKGTAIALTGKNKDTKHVLTEGMCIVIPAGTWHQIINSSNTDYLKLYTIYSPADHPPGEIDVRRPQSGGSGSKTGDFKNKYYKYKYKYFKLRSSVPRELN</sequence>
<reference key="1">
    <citation type="journal article" date="2004" name="Science">
        <title>The 1.2-megabase genome sequence of Mimivirus.</title>
        <authorList>
            <person name="Raoult D."/>
            <person name="Audic S."/>
            <person name="Robert C."/>
            <person name="Abergel C."/>
            <person name="Renesto P."/>
            <person name="Ogata H."/>
            <person name="La Scola B."/>
            <person name="Susan M."/>
            <person name="Claverie J.-M."/>
        </authorList>
    </citation>
    <scope>NUCLEOTIDE SEQUENCE [LARGE SCALE GENOMIC DNA]</scope>
    <source>
        <strain>Rowbotham-Bradford</strain>
    </source>
</reference>
<reference key="2">
    <citation type="journal article" date="2006" name="J. Virol.">
        <title>Mimivirus giant particles incorporate a large fraction of anonymous and unique gene products.</title>
        <authorList>
            <person name="Renesto P."/>
            <person name="Abergel C."/>
            <person name="Decloquement P."/>
            <person name="Moinier D."/>
            <person name="Azza S."/>
            <person name="Ogata H."/>
            <person name="Fourquet P."/>
            <person name="Gorvel J.-P."/>
            <person name="Claverie J.-M."/>
            <person name="Raoult D."/>
        </authorList>
    </citation>
    <scope>IDENTIFICATION BY MASS SPECTROMETRY [LARGE SCALE ANALYSIS]</scope>
    <scope>SUBCELLULAR LOCATION</scope>
</reference>
<accession>Q5UP75</accession>
<organismHost>
    <name type="scientific">Acanthamoeba polyphaga</name>
    <name type="common">Amoeba</name>
    <dbReference type="NCBI Taxonomy" id="5757"/>
</organismHost>
<protein>
    <recommendedName>
        <fullName>Uncharacterized protein L612</fullName>
    </recommendedName>
</protein>
<name>YL612_MIMIV</name>
<comment type="subcellular location">
    <subcellularLocation>
        <location evidence="2">Virion</location>
    </subcellularLocation>
</comment>